<feature type="chain" id="PRO_0000451633" description="Mu/delta-theraphotoxin-Pm2a" evidence="2">
    <location>
        <begin position="1"/>
        <end position="33"/>
    </location>
</feature>
<feature type="modified residue" description="Phenylalanine amide" evidence="2">
    <location>
        <position position="33"/>
    </location>
</feature>
<feature type="disulfide bond" evidence="1">
    <location>
        <begin position="2"/>
        <end position="16"/>
    </location>
</feature>
<feature type="disulfide bond" evidence="1">
    <location>
        <begin position="9"/>
        <end position="21"/>
    </location>
</feature>
<feature type="disulfide bond" evidence="1">
    <location>
        <begin position="15"/>
        <end position="27"/>
    </location>
</feature>
<feature type="mutagenesis site" description="Increase in ability to inhibit Nav1.7/SCN9A and loss of ability to inhibit inactivation." evidence="2">
    <original>C</original>
    <variation>CK</variation>
    <location>
        <position position="21"/>
    </location>
</feature>
<comment type="function">
    <text evidence="2">Gating-modifier toxin with very weak activity on Nav1.7/SCN9A and Nav1.8/SCN10A. Shows 22% peak current inhibition (at 10 uM) on Nav1.8/SCN10A sodium channels. Show peak current inhibition and delays fast inactivation on Nav1.7/SCN9A (EC(50)&gt;10 uM).</text>
</comment>
<comment type="subcellular location">
    <subcellularLocation>
        <location evidence="2">Secreted</location>
    </subcellularLocation>
</comment>
<comment type="tissue specificity">
    <text evidence="5">Expressed by the venom gland.</text>
</comment>
<comment type="domain">
    <text evidence="1">The presence of a 'disulfide through disulfide knot' structurally defines this protein as a knottin.</text>
</comment>
<comment type="mass spectrometry" mass="38017.5" method="MALDI" evidence="2"/>
<comment type="similarity">
    <text evidence="4">Belongs to the neurotoxin 10 (Hwtx-1) family. 47 subfamily.</text>
</comment>
<reference key="1">
    <citation type="journal article" date="2020" name="Biomedicines">
        <title>Addition of K22 converts spider venom peptide Pme2a from an activator to an inhibitor of Nav1.7.</title>
        <authorList>
            <person name="Yin K."/>
            <person name="Deuis J.R."/>
            <person name="Dekan Z."/>
            <person name="Jin A.H."/>
            <person name="Alewood P.F."/>
            <person name="King G.F."/>
            <person name="Herzig V."/>
            <person name="Vetter I."/>
        </authorList>
    </citation>
    <scope>PROTEIN SEQUENCE</scope>
    <scope>FUNCTION</scope>
    <scope>MASS SPECTROMETRY</scope>
    <scope>AMIDATION AT PHE-33</scope>
    <scope>SUBCELLULAR LOCATION</scope>
    <scope>MUTAGENESIS OF CYS-21</scope>
    <source>
        <tissue>Venom</tissue>
    </source>
</reference>
<accession>P0DQO1</accession>
<name>PME2A_POEME</name>
<protein>
    <recommendedName>
        <fullName evidence="3">Mu/delta-theraphotoxin-Pm2a</fullName>
        <shortName evidence="3">Mu/delta-TRTX-Pm2a</shortName>
    </recommendedName>
    <alternativeName>
        <fullName evidence="4">Delta/mu-theraphotoxin-Pm2a</fullName>
    </alternativeName>
</protein>
<dbReference type="SMR" id="P0DQO1"/>
<dbReference type="GO" id="GO:0005576">
    <property type="term" value="C:extracellular region"/>
    <property type="evidence" value="ECO:0007669"/>
    <property type="project" value="UniProtKB-SubCell"/>
</dbReference>
<dbReference type="GO" id="GO:0008200">
    <property type="term" value="F:ion channel inhibitor activity"/>
    <property type="evidence" value="ECO:0007669"/>
    <property type="project" value="InterPro"/>
</dbReference>
<dbReference type="GO" id="GO:0017080">
    <property type="term" value="F:sodium channel regulator activity"/>
    <property type="evidence" value="ECO:0007669"/>
    <property type="project" value="UniProtKB-KW"/>
</dbReference>
<dbReference type="GO" id="GO:0090729">
    <property type="term" value="F:toxin activity"/>
    <property type="evidence" value="ECO:0007669"/>
    <property type="project" value="UniProtKB-KW"/>
</dbReference>
<dbReference type="InterPro" id="IPR011696">
    <property type="entry name" value="Huwentoxin-1"/>
</dbReference>
<dbReference type="Pfam" id="PF07740">
    <property type="entry name" value="Toxin_12"/>
    <property type="match status" value="1"/>
</dbReference>
<dbReference type="SUPFAM" id="SSF57059">
    <property type="entry name" value="omega toxin-like"/>
    <property type="match status" value="1"/>
</dbReference>
<sequence length="33" mass="3817">GCTKFMGSCKTDADCCEHLECYKYKWCGWDGTF</sequence>
<proteinExistence type="evidence at protein level"/>
<organism>
    <name type="scientific">Poecilotheria metallica</name>
    <name type="common">Metallic blue ornamental tree spider</name>
    <dbReference type="NCBI Taxonomy" id="1956341"/>
    <lineage>
        <taxon>Eukaryota</taxon>
        <taxon>Metazoa</taxon>
        <taxon>Ecdysozoa</taxon>
        <taxon>Arthropoda</taxon>
        <taxon>Chelicerata</taxon>
        <taxon>Arachnida</taxon>
        <taxon>Araneae</taxon>
        <taxon>Mygalomorphae</taxon>
        <taxon>Theraphosidae</taxon>
        <taxon>Poecilotheria</taxon>
    </lineage>
</organism>
<keyword id="KW-0027">Amidation</keyword>
<keyword id="KW-0903">Direct protein sequencing</keyword>
<keyword id="KW-1015">Disulfide bond</keyword>
<keyword id="KW-0872">Ion channel impairing toxin</keyword>
<keyword id="KW-0960">Knottin</keyword>
<keyword id="KW-0528">Neurotoxin</keyword>
<keyword id="KW-0964">Secreted</keyword>
<keyword id="KW-0800">Toxin</keyword>
<keyword id="KW-0738">Voltage-gated sodium channel impairing toxin</keyword>
<evidence type="ECO:0000250" key="1">
    <source>
        <dbReference type="UniProtKB" id="P60992"/>
    </source>
</evidence>
<evidence type="ECO:0000269" key="2">
    <source>
    </source>
</evidence>
<evidence type="ECO:0000303" key="3">
    <source>
    </source>
</evidence>
<evidence type="ECO:0000305" key="4"/>
<evidence type="ECO:0000305" key="5">
    <source>
    </source>
</evidence>